<proteinExistence type="inferred from homology"/>
<feature type="initiator methionine" description="Removed" evidence="1">
    <location>
        <position position="1"/>
    </location>
</feature>
<feature type="chain" id="PRO_0000135409" description="Glutamine--fructose-6-phosphate aminotransferase [isomerizing]">
    <location>
        <begin position="2"/>
        <end position="610"/>
    </location>
</feature>
<feature type="domain" description="Glutamine amidotransferase type-2" evidence="1">
    <location>
        <begin position="2"/>
        <end position="218"/>
    </location>
</feature>
<feature type="domain" description="SIS 1" evidence="1">
    <location>
        <begin position="286"/>
        <end position="426"/>
    </location>
</feature>
<feature type="domain" description="SIS 2" evidence="1">
    <location>
        <begin position="459"/>
        <end position="600"/>
    </location>
</feature>
<feature type="active site" description="Nucleophile; for GATase activity" evidence="1">
    <location>
        <position position="2"/>
    </location>
</feature>
<feature type="active site" description="For Fru-6P isomerization activity" evidence="1">
    <location>
        <position position="605"/>
    </location>
</feature>
<protein>
    <recommendedName>
        <fullName evidence="1">Glutamine--fructose-6-phosphate aminotransferase [isomerizing]</fullName>
        <ecNumber evidence="1">2.6.1.16</ecNumber>
    </recommendedName>
    <alternativeName>
        <fullName evidence="1">D-fructose-6-phosphate amidotransferase</fullName>
    </alternativeName>
    <alternativeName>
        <fullName evidence="1">GFAT</fullName>
    </alternativeName>
    <alternativeName>
        <fullName evidence="1">Glucosamine-6-phosphate synthase</fullName>
    </alternativeName>
    <alternativeName>
        <fullName evidence="1">Hexosephosphate aminotransferase</fullName>
    </alternativeName>
    <alternativeName>
        <fullName evidence="1">L-glutamine--D-fructose-6-phosphate amidotransferase</fullName>
    </alternativeName>
</protein>
<name>GLMS_ALIF1</name>
<evidence type="ECO:0000255" key="1">
    <source>
        <dbReference type="HAMAP-Rule" id="MF_00164"/>
    </source>
</evidence>
<comment type="function">
    <text evidence="1">Catalyzes the first step in hexosamine metabolism, converting fructose-6P into glucosamine-6P using glutamine as a nitrogen source.</text>
</comment>
<comment type="catalytic activity">
    <reaction evidence="1">
        <text>D-fructose 6-phosphate + L-glutamine = D-glucosamine 6-phosphate + L-glutamate</text>
        <dbReference type="Rhea" id="RHEA:13237"/>
        <dbReference type="ChEBI" id="CHEBI:29985"/>
        <dbReference type="ChEBI" id="CHEBI:58359"/>
        <dbReference type="ChEBI" id="CHEBI:58725"/>
        <dbReference type="ChEBI" id="CHEBI:61527"/>
        <dbReference type="EC" id="2.6.1.16"/>
    </reaction>
</comment>
<comment type="subunit">
    <text evidence="1">Homodimer.</text>
</comment>
<comment type="subcellular location">
    <subcellularLocation>
        <location evidence="1">Cytoplasm</location>
    </subcellularLocation>
</comment>
<sequence>MCGIVGAVAQRDVAEILVEGLRRLEYRGYDSAGVAVVDAEHNYTRIRRLGKVKELADAVETAHVVGGTGIAHTRWATHGEPSEVNAHPHVSGDITLVHNGIIENHESLRTLLQERGYIFESQTDTEVIAHLVEWELRSSGSLLEAVQKTATQLEGAYGTVVMDRREPERLVVARSGSPIVIGCGVGENFLASDQLALLNVTRRFMYLEEGDVAEITRREIRVFDARGEQVERAITESNAEHDAGDKGQYRHFMQKEVFEQPKALINTMEGRITNDSVVTESIGVNAVEILNKVEHVQIIACGTSYNAGMTARYWFESLAGVSCDVEIASEFRYRKFVTRPNSLLITLSQSGETADTLAALRLAKERGYMGAMTVCNVAGSSLVRESDFAFMTRAGTEIGVASTKAFTTQLAALLMLVTALGKQQNRISKEKEKEIVEALHALPAQIEQALSFDKEIEALAPDFADKHHTLFLGRGEFYPIAVEASLKLKEISYIHAEAYAAGELKHGPLALIDAEMPVVVVAPTNDLLEKLKSNVEEVRARGGLLYVFADEQAGFEADESMKIITMPHVSDITAPIYYTIPMQLLSYHVALIKGTDVDQPRNLAKAVTVE</sequence>
<reference key="1">
    <citation type="journal article" date="2005" name="Proc. Natl. Acad. Sci. U.S.A.">
        <title>Complete genome sequence of Vibrio fischeri: a symbiotic bacterium with pathogenic congeners.</title>
        <authorList>
            <person name="Ruby E.G."/>
            <person name="Urbanowski M."/>
            <person name="Campbell J."/>
            <person name="Dunn A."/>
            <person name="Faini M."/>
            <person name="Gunsalus R."/>
            <person name="Lostroh P."/>
            <person name="Lupp C."/>
            <person name="McCann J."/>
            <person name="Millikan D."/>
            <person name="Schaefer A."/>
            <person name="Stabb E."/>
            <person name="Stevens A."/>
            <person name="Visick K."/>
            <person name="Whistler C."/>
            <person name="Greenberg E.P."/>
        </authorList>
    </citation>
    <scope>NUCLEOTIDE SEQUENCE [LARGE SCALE GENOMIC DNA]</scope>
    <source>
        <strain>ATCC 700601 / ES114</strain>
    </source>
</reference>
<gene>
    <name evidence="1" type="primary">glmS</name>
    <name type="ordered locus">VF_2372</name>
</gene>
<organism>
    <name type="scientific">Aliivibrio fischeri (strain ATCC 700601 / ES114)</name>
    <name type="common">Vibrio fischeri</name>
    <dbReference type="NCBI Taxonomy" id="312309"/>
    <lineage>
        <taxon>Bacteria</taxon>
        <taxon>Pseudomonadati</taxon>
        <taxon>Pseudomonadota</taxon>
        <taxon>Gammaproteobacteria</taxon>
        <taxon>Vibrionales</taxon>
        <taxon>Vibrionaceae</taxon>
        <taxon>Aliivibrio</taxon>
    </lineage>
</organism>
<keyword id="KW-0032">Aminotransferase</keyword>
<keyword id="KW-0963">Cytoplasm</keyword>
<keyword id="KW-0315">Glutamine amidotransferase</keyword>
<keyword id="KW-1185">Reference proteome</keyword>
<keyword id="KW-0677">Repeat</keyword>
<keyword id="KW-0808">Transferase</keyword>
<dbReference type="EC" id="2.6.1.16" evidence="1"/>
<dbReference type="EMBL" id="CP000020">
    <property type="protein sequence ID" value="AAW86867.1"/>
    <property type="molecule type" value="Genomic_DNA"/>
</dbReference>
<dbReference type="RefSeq" id="WP_011262763.1">
    <property type="nucleotide sequence ID" value="NC_006840.2"/>
</dbReference>
<dbReference type="RefSeq" id="YP_205755.1">
    <property type="nucleotide sequence ID" value="NC_006840.2"/>
</dbReference>
<dbReference type="SMR" id="Q5E279"/>
<dbReference type="STRING" id="312309.VF_2372"/>
<dbReference type="EnsemblBacteria" id="AAW86867">
    <property type="protein sequence ID" value="AAW86867"/>
    <property type="gene ID" value="VF_2372"/>
</dbReference>
<dbReference type="GeneID" id="54165092"/>
<dbReference type="KEGG" id="vfi:VF_2372"/>
<dbReference type="PATRIC" id="fig|312309.11.peg.2409"/>
<dbReference type="eggNOG" id="COG0449">
    <property type="taxonomic scope" value="Bacteria"/>
</dbReference>
<dbReference type="HOGENOM" id="CLU_012520_5_2_6"/>
<dbReference type="OrthoDB" id="9761808at2"/>
<dbReference type="Proteomes" id="UP000000537">
    <property type="component" value="Chromosome I"/>
</dbReference>
<dbReference type="GO" id="GO:0005829">
    <property type="term" value="C:cytosol"/>
    <property type="evidence" value="ECO:0007669"/>
    <property type="project" value="TreeGrafter"/>
</dbReference>
<dbReference type="GO" id="GO:0097367">
    <property type="term" value="F:carbohydrate derivative binding"/>
    <property type="evidence" value="ECO:0007669"/>
    <property type="project" value="InterPro"/>
</dbReference>
<dbReference type="GO" id="GO:0004360">
    <property type="term" value="F:glutamine-fructose-6-phosphate transaminase (isomerizing) activity"/>
    <property type="evidence" value="ECO:0007669"/>
    <property type="project" value="UniProtKB-UniRule"/>
</dbReference>
<dbReference type="GO" id="GO:0005975">
    <property type="term" value="P:carbohydrate metabolic process"/>
    <property type="evidence" value="ECO:0007669"/>
    <property type="project" value="UniProtKB-UniRule"/>
</dbReference>
<dbReference type="GO" id="GO:0006002">
    <property type="term" value="P:fructose 6-phosphate metabolic process"/>
    <property type="evidence" value="ECO:0007669"/>
    <property type="project" value="TreeGrafter"/>
</dbReference>
<dbReference type="GO" id="GO:0006487">
    <property type="term" value="P:protein N-linked glycosylation"/>
    <property type="evidence" value="ECO:0007669"/>
    <property type="project" value="TreeGrafter"/>
</dbReference>
<dbReference type="GO" id="GO:0006047">
    <property type="term" value="P:UDP-N-acetylglucosamine metabolic process"/>
    <property type="evidence" value="ECO:0007669"/>
    <property type="project" value="TreeGrafter"/>
</dbReference>
<dbReference type="CDD" id="cd00714">
    <property type="entry name" value="GFAT"/>
    <property type="match status" value="1"/>
</dbReference>
<dbReference type="CDD" id="cd05008">
    <property type="entry name" value="SIS_GlmS_GlmD_1"/>
    <property type="match status" value="1"/>
</dbReference>
<dbReference type="CDD" id="cd05009">
    <property type="entry name" value="SIS_GlmS_GlmD_2"/>
    <property type="match status" value="1"/>
</dbReference>
<dbReference type="FunFam" id="3.40.50.10490:FF:000001">
    <property type="entry name" value="Glutamine--fructose-6-phosphate aminotransferase [isomerizing]"/>
    <property type="match status" value="1"/>
</dbReference>
<dbReference type="FunFam" id="3.40.50.10490:FF:000002">
    <property type="entry name" value="Glutamine--fructose-6-phosphate aminotransferase [isomerizing]"/>
    <property type="match status" value="1"/>
</dbReference>
<dbReference type="FunFam" id="3.60.20.10:FF:000006">
    <property type="entry name" value="Glutamine--fructose-6-phosphate aminotransferase [isomerizing]"/>
    <property type="match status" value="1"/>
</dbReference>
<dbReference type="Gene3D" id="3.40.50.10490">
    <property type="entry name" value="Glucose-6-phosphate isomerase like protein, domain 1"/>
    <property type="match status" value="2"/>
</dbReference>
<dbReference type="Gene3D" id="3.60.20.10">
    <property type="entry name" value="Glutamine Phosphoribosylpyrophosphate, subunit 1, domain 1"/>
    <property type="match status" value="1"/>
</dbReference>
<dbReference type="HAMAP" id="MF_00164">
    <property type="entry name" value="GlmS"/>
    <property type="match status" value="1"/>
</dbReference>
<dbReference type="InterPro" id="IPR017932">
    <property type="entry name" value="GATase_2_dom"/>
</dbReference>
<dbReference type="InterPro" id="IPR005855">
    <property type="entry name" value="GFAT"/>
</dbReference>
<dbReference type="InterPro" id="IPR047084">
    <property type="entry name" value="GFAT_N"/>
</dbReference>
<dbReference type="InterPro" id="IPR035466">
    <property type="entry name" value="GlmS/AgaS_SIS"/>
</dbReference>
<dbReference type="InterPro" id="IPR035490">
    <property type="entry name" value="GlmS/FrlB_SIS"/>
</dbReference>
<dbReference type="InterPro" id="IPR029055">
    <property type="entry name" value="Ntn_hydrolases_N"/>
</dbReference>
<dbReference type="InterPro" id="IPR001347">
    <property type="entry name" value="SIS_dom"/>
</dbReference>
<dbReference type="InterPro" id="IPR046348">
    <property type="entry name" value="SIS_dom_sf"/>
</dbReference>
<dbReference type="NCBIfam" id="TIGR01135">
    <property type="entry name" value="glmS"/>
    <property type="match status" value="1"/>
</dbReference>
<dbReference type="NCBIfam" id="NF001484">
    <property type="entry name" value="PRK00331.1"/>
    <property type="match status" value="1"/>
</dbReference>
<dbReference type="PANTHER" id="PTHR10937">
    <property type="entry name" value="GLUCOSAMINE--FRUCTOSE-6-PHOSPHATE AMINOTRANSFERASE, ISOMERIZING"/>
    <property type="match status" value="1"/>
</dbReference>
<dbReference type="PANTHER" id="PTHR10937:SF0">
    <property type="entry name" value="GLUTAMINE--FRUCTOSE-6-PHOSPHATE TRANSAMINASE (ISOMERIZING)"/>
    <property type="match status" value="1"/>
</dbReference>
<dbReference type="Pfam" id="PF13522">
    <property type="entry name" value="GATase_6"/>
    <property type="match status" value="1"/>
</dbReference>
<dbReference type="Pfam" id="PF01380">
    <property type="entry name" value="SIS"/>
    <property type="match status" value="2"/>
</dbReference>
<dbReference type="SUPFAM" id="SSF56235">
    <property type="entry name" value="N-terminal nucleophile aminohydrolases (Ntn hydrolases)"/>
    <property type="match status" value="1"/>
</dbReference>
<dbReference type="SUPFAM" id="SSF53697">
    <property type="entry name" value="SIS domain"/>
    <property type="match status" value="1"/>
</dbReference>
<dbReference type="PROSITE" id="PS51278">
    <property type="entry name" value="GATASE_TYPE_2"/>
    <property type="match status" value="1"/>
</dbReference>
<dbReference type="PROSITE" id="PS51464">
    <property type="entry name" value="SIS"/>
    <property type="match status" value="2"/>
</dbReference>
<accession>Q5E279</accession>